<feature type="chain" id="PRO_0000163809" description="8-amino-7-oxononanoate synthase 2">
    <location>
        <begin position="1"/>
        <end position="389"/>
    </location>
</feature>
<feature type="binding site" evidence="1">
    <location>
        <position position="21"/>
    </location>
    <ligand>
        <name>substrate</name>
    </ligand>
</feature>
<feature type="binding site" evidence="1">
    <location>
        <begin position="108"/>
        <end position="109"/>
    </location>
    <ligand>
        <name>pyridoxal 5'-phosphate</name>
        <dbReference type="ChEBI" id="CHEBI:597326"/>
    </ligand>
</feature>
<feature type="binding site" evidence="1">
    <location>
        <position position="133"/>
    </location>
    <ligand>
        <name>substrate</name>
    </ligand>
</feature>
<feature type="binding site" evidence="1">
    <location>
        <position position="180"/>
    </location>
    <ligand>
        <name>pyridoxal 5'-phosphate</name>
        <dbReference type="ChEBI" id="CHEBI:597326"/>
    </ligand>
</feature>
<feature type="binding site" evidence="1">
    <location>
        <begin position="205"/>
        <end position="208"/>
    </location>
    <ligand>
        <name>pyridoxal 5'-phosphate</name>
        <dbReference type="ChEBI" id="CHEBI:597326"/>
    </ligand>
</feature>
<feature type="binding site" evidence="1">
    <location>
        <begin position="234"/>
        <end position="237"/>
    </location>
    <ligand>
        <name>pyridoxal 5'-phosphate</name>
        <dbReference type="ChEBI" id="CHEBI:597326"/>
    </ligand>
</feature>
<feature type="binding site" evidence="1">
    <location>
        <position position="351"/>
    </location>
    <ligand>
        <name>substrate</name>
    </ligand>
</feature>
<feature type="modified residue" description="N6-(pyridoxal phosphate)lysine" evidence="1">
    <location>
        <position position="237"/>
    </location>
</feature>
<name>BIOF2_BACSU</name>
<reference key="1">
    <citation type="journal article" date="1996" name="J. Bacteriol.">
        <title>Cloning, sequencing, and characterization of the Bacillus subtilis biotin biosynthetic operon.</title>
        <authorList>
            <person name="Bower S."/>
            <person name="Perkins J.B."/>
            <person name="Yocum R.R."/>
            <person name="Howitt C.L."/>
            <person name="Rahaim P."/>
            <person name="Pero J."/>
        </authorList>
    </citation>
    <scope>NUCLEOTIDE SEQUENCE [GENOMIC DNA]</scope>
    <scope>PROBABLE FUNCTION AS A 8-AMINO-7-OXONONANOATE SYNTHASE</scope>
</reference>
<reference key="2">
    <citation type="journal article" date="1997" name="Microbiology">
        <title>Sequencing and functional annotation of the Bacillus subtilis genes in the 200 kb rrnB-dnaB region.</title>
        <authorList>
            <person name="Lapidus A."/>
            <person name="Galleron N."/>
            <person name="Sorokin A."/>
            <person name="Ehrlich S.D."/>
        </authorList>
    </citation>
    <scope>NUCLEOTIDE SEQUENCE [GENOMIC DNA]</scope>
    <source>
        <strain>168</strain>
    </source>
</reference>
<reference key="3">
    <citation type="journal article" date="1997" name="Nature">
        <title>The complete genome sequence of the Gram-positive bacterium Bacillus subtilis.</title>
        <authorList>
            <person name="Kunst F."/>
            <person name="Ogasawara N."/>
            <person name="Moszer I."/>
            <person name="Albertini A.M."/>
            <person name="Alloni G."/>
            <person name="Azevedo V."/>
            <person name="Bertero M.G."/>
            <person name="Bessieres P."/>
            <person name="Bolotin A."/>
            <person name="Borchert S."/>
            <person name="Borriss R."/>
            <person name="Boursier L."/>
            <person name="Brans A."/>
            <person name="Braun M."/>
            <person name="Brignell S.C."/>
            <person name="Bron S."/>
            <person name="Brouillet S."/>
            <person name="Bruschi C.V."/>
            <person name="Caldwell B."/>
            <person name="Capuano V."/>
            <person name="Carter N.M."/>
            <person name="Choi S.-K."/>
            <person name="Codani J.-J."/>
            <person name="Connerton I.F."/>
            <person name="Cummings N.J."/>
            <person name="Daniel R.A."/>
            <person name="Denizot F."/>
            <person name="Devine K.M."/>
            <person name="Duesterhoeft A."/>
            <person name="Ehrlich S.D."/>
            <person name="Emmerson P.T."/>
            <person name="Entian K.-D."/>
            <person name="Errington J."/>
            <person name="Fabret C."/>
            <person name="Ferrari E."/>
            <person name="Foulger D."/>
            <person name="Fritz C."/>
            <person name="Fujita M."/>
            <person name="Fujita Y."/>
            <person name="Fuma S."/>
            <person name="Galizzi A."/>
            <person name="Galleron N."/>
            <person name="Ghim S.-Y."/>
            <person name="Glaser P."/>
            <person name="Goffeau A."/>
            <person name="Golightly E.J."/>
            <person name="Grandi G."/>
            <person name="Guiseppi G."/>
            <person name="Guy B.J."/>
            <person name="Haga K."/>
            <person name="Haiech J."/>
            <person name="Harwood C.R."/>
            <person name="Henaut A."/>
            <person name="Hilbert H."/>
            <person name="Holsappel S."/>
            <person name="Hosono S."/>
            <person name="Hullo M.-F."/>
            <person name="Itaya M."/>
            <person name="Jones L.-M."/>
            <person name="Joris B."/>
            <person name="Karamata D."/>
            <person name="Kasahara Y."/>
            <person name="Klaerr-Blanchard M."/>
            <person name="Klein C."/>
            <person name="Kobayashi Y."/>
            <person name="Koetter P."/>
            <person name="Koningstein G."/>
            <person name="Krogh S."/>
            <person name="Kumano M."/>
            <person name="Kurita K."/>
            <person name="Lapidus A."/>
            <person name="Lardinois S."/>
            <person name="Lauber J."/>
            <person name="Lazarevic V."/>
            <person name="Lee S.-M."/>
            <person name="Levine A."/>
            <person name="Liu H."/>
            <person name="Masuda S."/>
            <person name="Mauel C."/>
            <person name="Medigue C."/>
            <person name="Medina N."/>
            <person name="Mellado R.P."/>
            <person name="Mizuno M."/>
            <person name="Moestl D."/>
            <person name="Nakai S."/>
            <person name="Noback M."/>
            <person name="Noone D."/>
            <person name="O'Reilly M."/>
            <person name="Ogawa K."/>
            <person name="Ogiwara A."/>
            <person name="Oudega B."/>
            <person name="Park S.-H."/>
            <person name="Parro V."/>
            <person name="Pohl T.M."/>
            <person name="Portetelle D."/>
            <person name="Porwollik S."/>
            <person name="Prescott A.M."/>
            <person name="Presecan E."/>
            <person name="Pujic P."/>
            <person name="Purnelle B."/>
            <person name="Rapoport G."/>
            <person name="Rey M."/>
            <person name="Reynolds S."/>
            <person name="Rieger M."/>
            <person name="Rivolta C."/>
            <person name="Rocha E."/>
            <person name="Roche B."/>
            <person name="Rose M."/>
            <person name="Sadaie Y."/>
            <person name="Sato T."/>
            <person name="Scanlan E."/>
            <person name="Schleich S."/>
            <person name="Schroeter R."/>
            <person name="Scoffone F."/>
            <person name="Sekiguchi J."/>
            <person name="Sekowska A."/>
            <person name="Seror S.J."/>
            <person name="Serror P."/>
            <person name="Shin B.-S."/>
            <person name="Soldo B."/>
            <person name="Sorokin A."/>
            <person name="Tacconi E."/>
            <person name="Takagi T."/>
            <person name="Takahashi H."/>
            <person name="Takemaru K."/>
            <person name="Takeuchi M."/>
            <person name="Tamakoshi A."/>
            <person name="Tanaka T."/>
            <person name="Terpstra P."/>
            <person name="Tognoni A."/>
            <person name="Tosato V."/>
            <person name="Uchiyama S."/>
            <person name="Vandenbol M."/>
            <person name="Vannier F."/>
            <person name="Vassarotti A."/>
            <person name="Viari A."/>
            <person name="Wambutt R."/>
            <person name="Wedler E."/>
            <person name="Wedler H."/>
            <person name="Weitzenegger T."/>
            <person name="Winters P."/>
            <person name="Wipat A."/>
            <person name="Yamamoto H."/>
            <person name="Yamane K."/>
            <person name="Yasumoto K."/>
            <person name="Yata K."/>
            <person name="Yoshida K."/>
            <person name="Yoshikawa H.-F."/>
            <person name="Zumstein E."/>
            <person name="Yoshikawa H."/>
            <person name="Danchin A."/>
        </authorList>
    </citation>
    <scope>NUCLEOTIDE SEQUENCE [LARGE SCALE GENOMIC DNA]</scope>
    <source>
        <strain>168</strain>
    </source>
</reference>
<evidence type="ECO:0000250" key="1"/>
<evidence type="ECO:0000305" key="2"/>
<organism>
    <name type="scientific">Bacillus subtilis (strain 168)</name>
    <dbReference type="NCBI Taxonomy" id="224308"/>
    <lineage>
        <taxon>Bacteria</taxon>
        <taxon>Bacillati</taxon>
        <taxon>Bacillota</taxon>
        <taxon>Bacilli</taxon>
        <taxon>Bacillales</taxon>
        <taxon>Bacillaceae</taxon>
        <taxon>Bacillus</taxon>
    </lineage>
</organism>
<proteinExistence type="evidence at protein level"/>
<gene>
    <name type="primary">bioF</name>
    <name type="ordered locus">BSU30220</name>
</gene>
<accession>P53556</accession>
<sequence>MKIDSWLNERLDRMKEAGVHRNLRSMDGAPVPERNIDGENQTVWSSNNYLGLASDRRLIDAAQTALQQFGTGSSGSRLTTGNSVWHEKLEKKIASFKLTEAALLFSSGYLANVGVLSSLPEKEDVILSDQLNHASMIDGCRLSKADTVVYRHIDMNDLENKLNETQRYQRRFIVTDGVFSMDGTIAPLDQIISLAKRYHAFVVVDDAHATGVLGDSGQGTSEYFGVCPDIVIGTLSKAVGAEGGFAAGSAVFIDFLLNHARTFIFQTAIPPASCAAAHEAFNIIEASREKRQLLFSYISMIRTSLKNMGYVVKGDHTPIIPVVIGDAHKTVLFAEKLQGKGIYAPAIRPPTVAPGESRIRITITSDHSMGDIDHLLQTFHSIGKELHII</sequence>
<protein>
    <recommendedName>
        <fullName>8-amino-7-oxononanoate synthase 2</fullName>
        <shortName>AONS</shortName>
        <ecNumber>2.3.1.47</ecNumber>
    </recommendedName>
    <alternativeName>
        <fullName>7-keto-8-amino-pelargonic acid synthase</fullName>
        <shortName>7-KAP synthase</shortName>
    </alternativeName>
    <alternativeName>
        <fullName>8-amino-7-ketopelargonate synthase</fullName>
    </alternativeName>
</protein>
<keyword id="KW-0093">Biotin biosynthesis</keyword>
<keyword id="KW-0663">Pyridoxal phosphate</keyword>
<keyword id="KW-1185">Reference proteome</keyword>
<keyword id="KW-0808">Transferase</keyword>
<comment type="function">
    <text evidence="2">Catalyzes the decarboxylative condensation of pimeloyl-[acyl-carrier protein] and L-alanine to produce 8-amino-7-oxononanoate (AON), [acyl-carrier protein], and carbon dioxide.</text>
</comment>
<comment type="catalytic activity">
    <reaction>
        <text>6-carboxyhexanoyl-[ACP] + L-alanine + H(+) = (8S)-8-amino-7-oxononanoate + holo-[ACP] + CO2</text>
        <dbReference type="Rhea" id="RHEA:42288"/>
        <dbReference type="Rhea" id="RHEA-COMP:9685"/>
        <dbReference type="Rhea" id="RHEA-COMP:9955"/>
        <dbReference type="ChEBI" id="CHEBI:15378"/>
        <dbReference type="ChEBI" id="CHEBI:16526"/>
        <dbReference type="ChEBI" id="CHEBI:57972"/>
        <dbReference type="ChEBI" id="CHEBI:64479"/>
        <dbReference type="ChEBI" id="CHEBI:78846"/>
        <dbReference type="ChEBI" id="CHEBI:149468"/>
        <dbReference type="EC" id="2.3.1.47"/>
    </reaction>
</comment>
<comment type="cofactor">
    <cofactor evidence="2">
        <name>pyridoxal 5'-phosphate</name>
        <dbReference type="ChEBI" id="CHEBI:597326"/>
    </cofactor>
</comment>
<comment type="pathway">
    <text>Cofactor biosynthesis; biotin biosynthesis.</text>
</comment>
<comment type="subunit">
    <text evidence="2">Homodimer.</text>
</comment>
<comment type="similarity">
    <text evidence="2">Belongs to the class-II pyridoxal-phosphate-dependent aminotransferase family. BioF subfamily.</text>
</comment>
<dbReference type="EC" id="2.3.1.47"/>
<dbReference type="EMBL" id="U51868">
    <property type="protein sequence ID" value="AAB17459.1"/>
    <property type="molecule type" value="Genomic_DNA"/>
</dbReference>
<dbReference type="EMBL" id="AF008220">
    <property type="protein sequence ID" value="AAC00263.1"/>
    <property type="molecule type" value="Genomic_DNA"/>
</dbReference>
<dbReference type="EMBL" id="AL009126">
    <property type="protein sequence ID" value="CAB15000.1"/>
    <property type="molecule type" value="Genomic_DNA"/>
</dbReference>
<dbReference type="PIR" id="F69594">
    <property type="entry name" value="F69594"/>
</dbReference>
<dbReference type="RefSeq" id="WP_009968008.1">
    <property type="nucleotide sequence ID" value="NZ_OZ025638.1"/>
</dbReference>
<dbReference type="SMR" id="P53556"/>
<dbReference type="FunCoup" id="P53556">
    <property type="interactions" value="583"/>
</dbReference>
<dbReference type="STRING" id="224308.BSU30220"/>
<dbReference type="PaxDb" id="224308-BSU30220"/>
<dbReference type="EnsemblBacteria" id="CAB15000">
    <property type="protein sequence ID" value="CAB15000"/>
    <property type="gene ID" value="BSU_30220"/>
</dbReference>
<dbReference type="GeneID" id="937268"/>
<dbReference type="KEGG" id="bsu:BSU30220"/>
<dbReference type="PATRIC" id="fig|224308.179.peg.3278"/>
<dbReference type="eggNOG" id="COG0156">
    <property type="taxonomic scope" value="Bacteria"/>
</dbReference>
<dbReference type="InParanoid" id="P53556"/>
<dbReference type="OrthoDB" id="9807157at2"/>
<dbReference type="PhylomeDB" id="P53556"/>
<dbReference type="BioCyc" id="BSUB:BSU30220-MONOMER"/>
<dbReference type="BioCyc" id="MetaCyc:BSU30220-MONOMER"/>
<dbReference type="BRENDA" id="2.3.1.47">
    <property type="organism ID" value="658"/>
</dbReference>
<dbReference type="UniPathway" id="UPA00078"/>
<dbReference type="Proteomes" id="UP000001570">
    <property type="component" value="Chromosome"/>
</dbReference>
<dbReference type="GO" id="GO:0008710">
    <property type="term" value="F:8-amino-7-oxononanoate synthase activity"/>
    <property type="evidence" value="ECO:0007669"/>
    <property type="project" value="UniProtKB-EC"/>
</dbReference>
<dbReference type="GO" id="GO:0030170">
    <property type="term" value="F:pyridoxal phosphate binding"/>
    <property type="evidence" value="ECO:0007669"/>
    <property type="project" value="InterPro"/>
</dbReference>
<dbReference type="GO" id="GO:0009102">
    <property type="term" value="P:biotin biosynthetic process"/>
    <property type="evidence" value="ECO:0007669"/>
    <property type="project" value="UniProtKB-UniPathway"/>
</dbReference>
<dbReference type="CDD" id="cd06454">
    <property type="entry name" value="KBL_like"/>
    <property type="match status" value="1"/>
</dbReference>
<dbReference type="FunFam" id="3.40.640.10:FF:000006">
    <property type="entry name" value="5-aminolevulinate synthase, mitochondrial"/>
    <property type="match status" value="1"/>
</dbReference>
<dbReference type="Gene3D" id="3.90.1150.10">
    <property type="entry name" value="Aspartate Aminotransferase, domain 1"/>
    <property type="match status" value="1"/>
</dbReference>
<dbReference type="Gene3D" id="3.40.640.10">
    <property type="entry name" value="Type I PLP-dependent aspartate aminotransferase-like (Major domain)"/>
    <property type="match status" value="1"/>
</dbReference>
<dbReference type="InterPro" id="IPR001917">
    <property type="entry name" value="Aminotrans_II_pyridoxalP_BS"/>
</dbReference>
<dbReference type="InterPro" id="IPR004839">
    <property type="entry name" value="Aminotransferase_I/II_large"/>
</dbReference>
<dbReference type="InterPro" id="IPR050087">
    <property type="entry name" value="AON_synthase_class-II"/>
</dbReference>
<dbReference type="InterPro" id="IPR004723">
    <property type="entry name" value="AONS_Archaea/Proteobacteria"/>
</dbReference>
<dbReference type="InterPro" id="IPR015424">
    <property type="entry name" value="PyrdxlP-dep_Trfase"/>
</dbReference>
<dbReference type="InterPro" id="IPR015421">
    <property type="entry name" value="PyrdxlP-dep_Trfase_major"/>
</dbReference>
<dbReference type="InterPro" id="IPR015422">
    <property type="entry name" value="PyrdxlP-dep_Trfase_small"/>
</dbReference>
<dbReference type="NCBIfam" id="TIGR00858">
    <property type="entry name" value="bioF"/>
    <property type="match status" value="1"/>
</dbReference>
<dbReference type="PANTHER" id="PTHR13693">
    <property type="entry name" value="CLASS II AMINOTRANSFERASE/8-AMINO-7-OXONONANOATE SYNTHASE"/>
    <property type="match status" value="1"/>
</dbReference>
<dbReference type="PANTHER" id="PTHR13693:SF3">
    <property type="entry name" value="LD36009P"/>
    <property type="match status" value="1"/>
</dbReference>
<dbReference type="Pfam" id="PF00155">
    <property type="entry name" value="Aminotran_1_2"/>
    <property type="match status" value="1"/>
</dbReference>
<dbReference type="SUPFAM" id="SSF53383">
    <property type="entry name" value="PLP-dependent transferases"/>
    <property type="match status" value="1"/>
</dbReference>
<dbReference type="PROSITE" id="PS00599">
    <property type="entry name" value="AA_TRANSFER_CLASS_2"/>
    <property type="match status" value="1"/>
</dbReference>